<comment type="subcellular location">
    <subcellularLocation>
        <location evidence="2">Membrane</location>
        <topology evidence="2">Multi-pass membrane protein</topology>
    </subcellularLocation>
</comment>
<comment type="similarity">
    <text evidence="2">Belongs to the TMEM9 family.</text>
</comment>
<feature type="chain" id="PRO_0000221039" description="Putative protein 2">
    <location>
        <begin position="1"/>
        <end position="187" status="greater than"/>
    </location>
</feature>
<feature type="transmembrane region" description="Helical" evidence="1">
    <location>
        <begin position="10"/>
        <end position="27"/>
    </location>
</feature>
<feature type="transmembrane region" description="Helical" evidence="1">
    <location>
        <begin position="99"/>
        <end position="121"/>
    </location>
</feature>
<feature type="non-terminal residue">
    <location>
        <position position="187"/>
    </location>
</feature>
<keyword id="KW-0472">Membrane</keyword>
<keyword id="KW-1185">Reference proteome</keyword>
<keyword id="KW-0812">Transmembrane</keyword>
<keyword id="KW-1133">Transmembrane helix</keyword>
<name>PUT2_TAKRU</name>
<sequence length="187" mass="21460">MPSDREGLWMLAAFALMTLFLLDNVGVTQAKSFDDVRCKCICPPYRNISGHIYNRNFTQKDCNCLHVVDPMPVPGNDVEAYCLLCECKYEERSTNTIRVTIIIFLSVVGALLLYMLFLLLVDPLIRKPDPLAQTLHNEEDSEDIQPQMSGDPARGNTVLERVEGAQQRWKKQVQEQRKTVFDRHKML</sequence>
<organism>
    <name type="scientific">Takifugu rubripes</name>
    <name type="common">Japanese pufferfish</name>
    <name type="synonym">Fugu rubripes</name>
    <dbReference type="NCBI Taxonomy" id="31033"/>
    <lineage>
        <taxon>Eukaryota</taxon>
        <taxon>Metazoa</taxon>
        <taxon>Chordata</taxon>
        <taxon>Craniata</taxon>
        <taxon>Vertebrata</taxon>
        <taxon>Euteleostomi</taxon>
        <taxon>Actinopterygii</taxon>
        <taxon>Neopterygii</taxon>
        <taxon>Teleostei</taxon>
        <taxon>Neoteleostei</taxon>
        <taxon>Acanthomorphata</taxon>
        <taxon>Eupercaria</taxon>
        <taxon>Tetraodontiformes</taxon>
        <taxon>Tetradontoidea</taxon>
        <taxon>Tetraodontidae</taxon>
        <taxon>Takifugu</taxon>
    </lineage>
</organism>
<protein>
    <recommendedName>
        <fullName>Putative protein 2</fullName>
        <shortName>PUT2</shortName>
    </recommendedName>
</protein>
<dbReference type="EMBL" id="AF026198">
    <property type="protein sequence ID" value="AAC15584.1"/>
    <property type="molecule type" value="Genomic_DNA"/>
</dbReference>
<dbReference type="PIR" id="T30536">
    <property type="entry name" value="T30536"/>
</dbReference>
<dbReference type="FunCoup" id="O73698">
    <property type="interactions" value="1416"/>
</dbReference>
<dbReference type="STRING" id="31033.ENSTRUP00000034423"/>
<dbReference type="eggNOG" id="KOG4007">
    <property type="taxonomic scope" value="Eukaryota"/>
</dbReference>
<dbReference type="InParanoid" id="O73698"/>
<dbReference type="OMA" id="QCTWKCA"/>
<dbReference type="Proteomes" id="UP000005226">
    <property type="component" value="Unplaced"/>
</dbReference>
<dbReference type="GO" id="GO:0005770">
    <property type="term" value="C:late endosome"/>
    <property type="evidence" value="ECO:0000250"/>
    <property type="project" value="UniProtKB"/>
</dbReference>
<dbReference type="GO" id="GO:0005765">
    <property type="term" value="C:lysosomal membrane"/>
    <property type="evidence" value="ECO:0007669"/>
    <property type="project" value="InterPro"/>
</dbReference>
<dbReference type="GO" id="GO:0005764">
    <property type="term" value="C:lysosome"/>
    <property type="evidence" value="ECO:0000250"/>
    <property type="project" value="UniProtKB"/>
</dbReference>
<dbReference type="InterPro" id="IPR008853">
    <property type="entry name" value="TMEM9/TMEM9B"/>
</dbReference>
<dbReference type="PANTHER" id="PTHR13064:SF1">
    <property type="entry name" value="PROTON-TRANSPORTING V-TYPE ATPASE COMPLEX ASSEMBLY REGULATOR TMEM9"/>
    <property type="match status" value="1"/>
</dbReference>
<dbReference type="PANTHER" id="PTHR13064">
    <property type="entry name" value="TRANSMEMBRANE PROTEIN 9 FAMILY MEMBER"/>
    <property type="match status" value="1"/>
</dbReference>
<dbReference type="Pfam" id="PF05434">
    <property type="entry name" value="Tmemb_9"/>
    <property type="match status" value="1"/>
</dbReference>
<accession>O73698</accession>
<reference key="1">
    <citation type="submission" date="1997-09" db="EMBL/GenBank/DDBJ databases">
        <title>Analysis of the genomic loci of Fugu rubripes homologs of the human disease genes L1CAM, G6PD and P55.</title>
        <authorList>
            <person name="Riboldi Tunnicliffe G.R."/>
            <person name="Platzer M."/>
            <person name="Nyakatura G."/>
            <person name="Elgar G.S."/>
            <person name="Brenner S."/>
            <person name="Rosenthal A."/>
        </authorList>
    </citation>
    <scope>NUCLEOTIDE SEQUENCE [GENOMIC DNA]</scope>
</reference>
<evidence type="ECO:0000255" key="1"/>
<evidence type="ECO:0000305" key="2"/>
<proteinExistence type="inferred from homology"/>